<dbReference type="EC" id="6.3.2.8" evidence="1"/>
<dbReference type="EMBL" id="CP001186">
    <property type="protein sequence ID" value="ACK93261.1"/>
    <property type="molecule type" value="Genomic_DNA"/>
</dbReference>
<dbReference type="RefSeq" id="WP_000219469.1">
    <property type="nucleotide sequence ID" value="NC_011772.1"/>
</dbReference>
<dbReference type="SMR" id="B7IKV4"/>
<dbReference type="GeneID" id="67468983"/>
<dbReference type="KEGG" id="bcg:BCG9842_B0437"/>
<dbReference type="HOGENOM" id="CLU_028104_1_0_9"/>
<dbReference type="UniPathway" id="UPA00219"/>
<dbReference type="Proteomes" id="UP000006744">
    <property type="component" value="Chromosome"/>
</dbReference>
<dbReference type="GO" id="GO:0005737">
    <property type="term" value="C:cytoplasm"/>
    <property type="evidence" value="ECO:0007669"/>
    <property type="project" value="UniProtKB-SubCell"/>
</dbReference>
<dbReference type="GO" id="GO:0005524">
    <property type="term" value="F:ATP binding"/>
    <property type="evidence" value="ECO:0007669"/>
    <property type="project" value="UniProtKB-UniRule"/>
</dbReference>
<dbReference type="GO" id="GO:0008763">
    <property type="term" value="F:UDP-N-acetylmuramate-L-alanine ligase activity"/>
    <property type="evidence" value="ECO:0007669"/>
    <property type="project" value="UniProtKB-UniRule"/>
</dbReference>
<dbReference type="GO" id="GO:0051301">
    <property type="term" value="P:cell division"/>
    <property type="evidence" value="ECO:0007669"/>
    <property type="project" value="UniProtKB-KW"/>
</dbReference>
<dbReference type="GO" id="GO:0071555">
    <property type="term" value="P:cell wall organization"/>
    <property type="evidence" value="ECO:0007669"/>
    <property type="project" value="UniProtKB-KW"/>
</dbReference>
<dbReference type="GO" id="GO:0009252">
    <property type="term" value="P:peptidoglycan biosynthetic process"/>
    <property type="evidence" value="ECO:0007669"/>
    <property type="project" value="UniProtKB-UniRule"/>
</dbReference>
<dbReference type="GO" id="GO:0008360">
    <property type="term" value="P:regulation of cell shape"/>
    <property type="evidence" value="ECO:0007669"/>
    <property type="project" value="UniProtKB-KW"/>
</dbReference>
<dbReference type="Gene3D" id="3.90.190.20">
    <property type="entry name" value="Mur ligase, C-terminal domain"/>
    <property type="match status" value="1"/>
</dbReference>
<dbReference type="Gene3D" id="3.40.1190.10">
    <property type="entry name" value="Mur-like, catalytic domain"/>
    <property type="match status" value="1"/>
</dbReference>
<dbReference type="Gene3D" id="3.40.50.720">
    <property type="entry name" value="NAD(P)-binding Rossmann-like Domain"/>
    <property type="match status" value="1"/>
</dbReference>
<dbReference type="HAMAP" id="MF_00046">
    <property type="entry name" value="MurC"/>
    <property type="match status" value="1"/>
</dbReference>
<dbReference type="InterPro" id="IPR036565">
    <property type="entry name" value="Mur-like_cat_sf"/>
</dbReference>
<dbReference type="InterPro" id="IPR004101">
    <property type="entry name" value="Mur_ligase_C"/>
</dbReference>
<dbReference type="InterPro" id="IPR036615">
    <property type="entry name" value="Mur_ligase_C_dom_sf"/>
</dbReference>
<dbReference type="InterPro" id="IPR013221">
    <property type="entry name" value="Mur_ligase_cen"/>
</dbReference>
<dbReference type="InterPro" id="IPR000713">
    <property type="entry name" value="Mur_ligase_N"/>
</dbReference>
<dbReference type="InterPro" id="IPR050061">
    <property type="entry name" value="MurCDEF_pg_biosynth"/>
</dbReference>
<dbReference type="InterPro" id="IPR005758">
    <property type="entry name" value="UDP-N-AcMur_Ala_ligase_MurC"/>
</dbReference>
<dbReference type="NCBIfam" id="TIGR01082">
    <property type="entry name" value="murC"/>
    <property type="match status" value="1"/>
</dbReference>
<dbReference type="PANTHER" id="PTHR43445:SF3">
    <property type="entry name" value="UDP-N-ACETYLMURAMATE--L-ALANINE LIGASE"/>
    <property type="match status" value="1"/>
</dbReference>
<dbReference type="PANTHER" id="PTHR43445">
    <property type="entry name" value="UDP-N-ACETYLMURAMATE--L-ALANINE LIGASE-RELATED"/>
    <property type="match status" value="1"/>
</dbReference>
<dbReference type="Pfam" id="PF01225">
    <property type="entry name" value="Mur_ligase"/>
    <property type="match status" value="1"/>
</dbReference>
<dbReference type="Pfam" id="PF02875">
    <property type="entry name" value="Mur_ligase_C"/>
    <property type="match status" value="1"/>
</dbReference>
<dbReference type="Pfam" id="PF08245">
    <property type="entry name" value="Mur_ligase_M"/>
    <property type="match status" value="1"/>
</dbReference>
<dbReference type="SUPFAM" id="SSF51984">
    <property type="entry name" value="MurCD N-terminal domain"/>
    <property type="match status" value="1"/>
</dbReference>
<dbReference type="SUPFAM" id="SSF53623">
    <property type="entry name" value="MurD-like peptide ligases, catalytic domain"/>
    <property type="match status" value="1"/>
</dbReference>
<dbReference type="SUPFAM" id="SSF53244">
    <property type="entry name" value="MurD-like peptide ligases, peptide-binding domain"/>
    <property type="match status" value="1"/>
</dbReference>
<proteinExistence type="inferred from homology"/>
<organism>
    <name type="scientific">Bacillus cereus (strain G9842)</name>
    <dbReference type="NCBI Taxonomy" id="405531"/>
    <lineage>
        <taxon>Bacteria</taxon>
        <taxon>Bacillati</taxon>
        <taxon>Bacillota</taxon>
        <taxon>Bacilli</taxon>
        <taxon>Bacillales</taxon>
        <taxon>Bacillaceae</taxon>
        <taxon>Bacillus</taxon>
        <taxon>Bacillus cereus group</taxon>
    </lineage>
</organism>
<feature type="chain" id="PRO_1000116616" description="UDP-N-acetylmuramate--L-alanine ligase">
    <location>
        <begin position="1"/>
        <end position="436"/>
    </location>
</feature>
<feature type="binding site" evidence="1">
    <location>
        <begin position="108"/>
        <end position="114"/>
    </location>
    <ligand>
        <name>ATP</name>
        <dbReference type="ChEBI" id="CHEBI:30616"/>
    </ligand>
</feature>
<protein>
    <recommendedName>
        <fullName evidence="1">UDP-N-acetylmuramate--L-alanine ligase</fullName>
        <ecNumber evidence="1">6.3.2.8</ecNumber>
    </recommendedName>
    <alternativeName>
        <fullName evidence="1">UDP-N-acetylmuramoyl-L-alanine synthetase</fullName>
    </alternativeName>
</protein>
<name>MURC_BACC2</name>
<reference key="1">
    <citation type="submission" date="2008-10" db="EMBL/GenBank/DDBJ databases">
        <title>Genome sequence of Bacillus cereus G9842.</title>
        <authorList>
            <person name="Dodson R.J."/>
            <person name="Durkin A.S."/>
            <person name="Rosovitz M.J."/>
            <person name="Rasko D.A."/>
            <person name="Hoffmaster A."/>
            <person name="Ravel J."/>
            <person name="Sutton G."/>
        </authorList>
    </citation>
    <scope>NUCLEOTIDE SEQUENCE [LARGE SCALE GENOMIC DNA]</scope>
    <source>
        <strain>G9842</strain>
    </source>
</reference>
<sequence>MTVYHFVGIKGTGMSSLAQILHDMKHTVQGSDYEKRFFTQTALEKRSISILPFDKNNVEEGQVIIAGNAFPDTHEEIVAAKELNIPVHRYHHFLGDLMSQYTSVAVTGAHGKTSTTGLLAHVMQGAHPTSYLIGDGTGHGVENSKYFVFEACEYRRHFLSYNPDYAIMTNIDFDHPDYFADINDVFSAFQEMALQVKKGIIACGDDEELQKIQAKVPVIFYGFGEDNDFQARNIQKRTDGTIFDVFVRNTYYDTFKITGYGNHSVLNALAVIALCHYENVDVEAVKHQLTTFEGVKRRFNEKPMGEQVIIDDYAHHPTEINATIEAARQKHPEREVVAVFQPHTFSRTEKFLDEFAESLSKADQVYLCDIFGSARENKGELTIEDLQKRIDGAELITDTTTDVLKKHKNGVLIFMGAGDIQKFEAAYVKEVQVAEK</sequence>
<evidence type="ECO:0000255" key="1">
    <source>
        <dbReference type="HAMAP-Rule" id="MF_00046"/>
    </source>
</evidence>
<comment type="function">
    <text evidence="1">Cell wall formation.</text>
</comment>
<comment type="catalytic activity">
    <reaction evidence="1">
        <text>UDP-N-acetyl-alpha-D-muramate + L-alanine + ATP = UDP-N-acetyl-alpha-D-muramoyl-L-alanine + ADP + phosphate + H(+)</text>
        <dbReference type="Rhea" id="RHEA:23372"/>
        <dbReference type="ChEBI" id="CHEBI:15378"/>
        <dbReference type="ChEBI" id="CHEBI:30616"/>
        <dbReference type="ChEBI" id="CHEBI:43474"/>
        <dbReference type="ChEBI" id="CHEBI:57972"/>
        <dbReference type="ChEBI" id="CHEBI:70757"/>
        <dbReference type="ChEBI" id="CHEBI:83898"/>
        <dbReference type="ChEBI" id="CHEBI:456216"/>
        <dbReference type="EC" id="6.3.2.8"/>
    </reaction>
</comment>
<comment type="pathway">
    <text evidence="1">Cell wall biogenesis; peptidoglycan biosynthesis.</text>
</comment>
<comment type="subcellular location">
    <subcellularLocation>
        <location evidence="1">Cytoplasm</location>
    </subcellularLocation>
</comment>
<comment type="similarity">
    <text evidence="1">Belongs to the MurCDEF family.</text>
</comment>
<accession>B7IKV4</accession>
<gene>
    <name evidence="1" type="primary">murC</name>
    <name type="ordered locus">BCG9842_B0437</name>
</gene>
<keyword id="KW-0067">ATP-binding</keyword>
<keyword id="KW-0131">Cell cycle</keyword>
<keyword id="KW-0132">Cell division</keyword>
<keyword id="KW-0133">Cell shape</keyword>
<keyword id="KW-0961">Cell wall biogenesis/degradation</keyword>
<keyword id="KW-0963">Cytoplasm</keyword>
<keyword id="KW-0436">Ligase</keyword>
<keyword id="KW-0547">Nucleotide-binding</keyword>
<keyword id="KW-0573">Peptidoglycan synthesis</keyword>